<organism>
    <name type="scientific">Acanthamoeba polyphaga mimivirus</name>
    <name type="common">APMV</name>
    <dbReference type="NCBI Taxonomy" id="212035"/>
    <lineage>
        <taxon>Viruses</taxon>
        <taxon>Varidnaviria</taxon>
        <taxon>Bamfordvirae</taxon>
        <taxon>Nucleocytoviricota</taxon>
        <taxon>Megaviricetes</taxon>
        <taxon>Imitervirales</taxon>
        <taxon>Mimiviridae</taxon>
        <taxon>Megamimivirinae</taxon>
        <taxon>Mimivirus</taxon>
        <taxon>Mimivirus bradfordmassiliense</taxon>
    </lineage>
</organism>
<accession>Q5UQB1</accession>
<dbReference type="EMBL" id="AY653733">
    <property type="protein sequence ID" value="AAV50491.1"/>
    <property type="molecule type" value="Genomic_DNA"/>
</dbReference>
<dbReference type="Proteomes" id="UP000001134">
    <property type="component" value="Genome"/>
</dbReference>
<name>YL218_MIMIV</name>
<keyword id="KW-1185">Reference proteome</keyword>
<feature type="chain" id="PRO_0000251110" description="Uncharacterized protein L218">
    <location>
        <begin position="1"/>
        <end position="242"/>
    </location>
</feature>
<organismHost>
    <name type="scientific">Acanthamoeba polyphaga</name>
    <name type="common">Amoeba</name>
    <dbReference type="NCBI Taxonomy" id="5757"/>
</organismHost>
<sequence>MTINGLLIKISPKKFFNTKAESEKYAAREMIQHIKTFSSQSHYSPNSETKQSHIIPSQCTTKKYTISDNTNNTIDTNKQQDTLKQLDFSKKCVIENIHDHYFTKIYIIDLENKPQLNLVPRQDSIYLGFINSLHHSVGKYSDWYNCTNDNIAEQISTSGNNKLLYCIDGGISDLSDHFMTAFIYPIINYISSRITNKFENTRTSICIISGDHAGYCTRYCLEKMIRWNKLSNIDVSNSIIVD</sequence>
<proteinExistence type="predicted"/>
<gene>
    <name type="ordered locus">MIMI_L218</name>
</gene>
<protein>
    <recommendedName>
        <fullName>Uncharacterized protein L218</fullName>
    </recommendedName>
</protein>
<reference key="1">
    <citation type="journal article" date="2004" name="Science">
        <title>The 1.2-megabase genome sequence of Mimivirus.</title>
        <authorList>
            <person name="Raoult D."/>
            <person name="Audic S."/>
            <person name="Robert C."/>
            <person name="Abergel C."/>
            <person name="Renesto P."/>
            <person name="Ogata H."/>
            <person name="La Scola B."/>
            <person name="Susan M."/>
            <person name="Claverie J.-M."/>
        </authorList>
    </citation>
    <scope>NUCLEOTIDE SEQUENCE [LARGE SCALE GENOMIC DNA]</scope>
    <source>
        <strain>Rowbotham-Bradford</strain>
    </source>
</reference>